<name>MEND_THEVB</name>
<sequence>MILTENLNVLWASVLFETLYRLGLRTVVLSPGSRSGPLAIAAAAHPHLEALPILDERSAAFFALGLVQQQGRPVALLCTSGTAAANFYPAIIEASLSHLPLIVLSADRPPELRFCQAGQAIDQVHLYGHAVRHYRELSLPELPLLPYLRQTLCHSWQTALWPDPGPVHLNIPLRDPLDLRSQANFHGELPKGFFDQVQPFVPPRVVTSLPWQTWQQMQRGLIIAGPSHGVDPLAEAAAIDRLSRFLQWPVLADALSSARGLPHGISHYDLLLRDAHLREYLRPEAVIQLGPLPTSKALREWLSACDPLIWCLDPTGDNNNPLHGRCQMLAIAPQAVDCPPDPLPPNPYLKDWQDQDQRVREQLKRTFEAIDWFSEVKLIYHLPQWLPSQTAIFVASSMPVRDVESVWQGSDRRHRFYFNRGANGIDGTLSTALGVAHRGQPTLLITGDLACLHDTNGWLITPQFQGCLTVLLINNRGGGIFEHLPIRQFDPPFEAFFATPQQVDFSYLAAAYGIPYHCLKDWADVEAQLRQTPWPKIRLLEFRSDRHRNAQWRQQVLAHLGG</sequence>
<protein>
    <recommendedName>
        <fullName evidence="1">2-succinyl-5-enolpyruvyl-6-hydroxy-3-cyclohexene-1-carboxylate synthase</fullName>
        <shortName evidence="1">SEPHCHC synthase</shortName>
        <ecNumber evidence="1">2.2.1.9</ecNumber>
    </recommendedName>
</protein>
<dbReference type="EC" id="2.2.1.9" evidence="1"/>
<dbReference type="EMBL" id="BA000039">
    <property type="protein sequence ID" value="BAC07683.1"/>
    <property type="molecule type" value="Genomic_DNA"/>
</dbReference>
<dbReference type="RefSeq" id="NP_680921.1">
    <property type="nucleotide sequence ID" value="NC_004113.1"/>
</dbReference>
<dbReference type="RefSeq" id="WP_011055985.1">
    <property type="nucleotide sequence ID" value="NC_004113.1"/>
</dbReference>
<dbReference type="SMR" id="Q8DMI6"/>
<dbReference type="STRING" id="197221.gene:10746709"/>
<dbReference type="EnsemblBacteria" id="BAC07683">
    <property type="protein sequence ID" value="BAC07683"/>
    <property type="gene ID" value="BAC07683"/>
</dbReference>
<dbReference type="KEGG" id="tel:tll0130"/>
<dbReference type="PATRIC" id="fig|197221.4.peg.134"/>
<dbReference type="eggNOG" id="COG1165">
    <property type="taxonomic scope" value="Bacteria"/>
</dbReference>
<dbReference type="UniPathway" id="UPA00995"/>
<dbReference type="UniPathway" id="UPA01057">
    <property type="reaction ID" value="UER00164"/>
</dbReference>
<dbReference type="Proteomes" id="UP000000440">
    <property type="component" value="Chromosome"/>
</dbReference>
<dbReference type="GO" id="GO:0070204">
    <property type="term" value="F:2-succinyl-5-enolpyruvyl-6-hydroxy-3-cyclohexene-1-carboxylic-acid synthase activity"/>
    <property type="evidence" value="ECO:0007669"/>
    <property type="project" value="UniProtKB-UniRule"/>
</dbReference>
<dbReference type="GO" id="GO:0000287">
    <property type="term" value="F:magnesium ion binding"/>
    <property type="evidence" value="ECO:0007669"/>
    <property type="project" value="UniProtKB-UniRule"/>
</dbReference>
<dbReference type="GO" id="GO:0030145">
    <property type="term" value="F:manganese ion binding"/>
    <property type="evidence" value="ECO:0007669"/>
    <property type="project" value="UniProtKB-UniRule"/>
</dbReference>
<dbReference type="GO" id="GO:0030976">
    <property type="term" value="F:thiamine pyrophosphate binding"/>
    <property type="evidence" value="ECO:0007669"/>
    <property type="project" value="UniProtKB-UniRule"/>
</dbReference>
<dbReference type="GO" id="GO:0009234">
    <property type="term" value="P:menaquinone biosynthetic process"/>
    <property type="evidence" value="ECO:0007669"/>
    <property type="project" value="InterPro"/>
</dbReference>
<dbReference type="GO" id="GO:0042372">
    <property type="term" value="P:phylloquinone biosynthetic process"/>
    <property type="evidence" value="ECO:0007669"/>
    <property type="project" value="UniProtKB-UniRule"/>
</dbReference>
<dbReference type="CDD" id="cd07037">
    <property type="entry name" value="TPP_PYR_MenD"/>
    <property type="match status" value="1"/>
</dbReference>
<dbReference type="CDD" id="cd02009">
    <property type="entry name" value="TPP_SHCHC_synthase"/>
    <property type="match status" value="1"/>
</dbReference>
<dbReference type="Gene3D" id="3.40.50.970">
    <property type="match status" value="2"/>
</dbReference>
<dbReference type="Gene3D" id="3.40.50.1220">
    <property type="entry name" value="TPP-binding domain"/>
    <property type="match status" value="1"/>
</dbReference>
<dbReference type="HAMAP" id="MF_01659">
    <property type="entry name" value="MenD"/>
    <property type="match status" value="1"/>
</dbReference>
<dbReference type="InterPro" id="IPR004433">
    <property type="entry name" value="MenaQ_synth_MenD"/>
</dbReference>
<dbReference type="InterPro" id="IPR032264">
    <property type="entry name" value="MenD_middle"/>
</dbReference>
<dbReference type="InterPro" id="IPR029061">
    <property type="entry name" value="THDP-binding"/>
</dbReference>
<dbReference type="InterPro" id="IPR012001">
    <property type="entry name" value="Thiamin_PyroP_enz_TPP-bd_dom"/>
</dbReference>
<dbReference type="InterPro" id="IPR011766">
    <property type="entry name" value="TPP_enzyme_TPP-bd"/>
</dbReference>
<dbReference type="NCBIfam" id="TIGR00173">
    <property type="entry name" value="menD"/>
    <property type="match status" value="1"/>
</dbReference>
<dbReference type="PANTHER" id="PTHR42916">
    <property type="entry name" value="2-SUCCINYL-5-ENOLPYRUVYL-6-HYDROXY-3-CYCLOHEXENE-1-CARBOXYLATE SYNTHASE"/>
    <property type="match status" value="1"/>
</dbReference>
<dbReference type="PANTHER" id="PTHR42916:SF1">
    <property type="entry name" value="PROTEIN PHYLLO, CHLOROPLASTIC"/>
    <property type="match status" value="1"/>
</dbReference>
<dbReference type="Pfam" id="PF02775">
    <property type="entry name" value="TPP_enzyme_C"/>
    <property type="match status" value="1"/>
</dbReference>
<dbReference type="Pfam" id="PF16582">
    <property type="entry name" value="TPP_enzyme_M_2"/>
    <property type="match status" value="1"/>
</dbReference>
<dbReference type="Pfam" id="PF02776">
    <property type="entry name" value="TPP_enzyme_N"/>
    <property type="match status" value="1"/>
</dbReference>
<dbReference type="PIRSF" id="PIRSF004983">
    <property type="entry name" value="MenD"/>
    <property type="match status" value="1"/>
</dbReference>
<dbReference type="SUPFAM" id="SSF52518">
    <property type="entry name" value="Thiamin diphosphate-binding fold (THDP-binding)"/>
    <property type="match status" value="2"/>
</dbReference>
<gene>
    <name evidence="1" type="primary">menD</name>
    <name type="ordered locus">tll0130</name>
</gene>
<organism>
    <name type="scientific">Thermosynechococcus vestitus (strain NIES-2133 / IAM M-273 / BP-1)</name>
    <dbReference type="NCBI Taxonomy" id="197221"/>
    <lineage>
        <taxon>Bacteria</taxon>
        <taxon>Bacillati</taxon>
        <taxon>Cyanobacteriota</taxon>
        <taxon>Cyanophyceae</taxon>
        <taxon>Acaryochloridales</taxon>
        <taxon>Thermosynechococcaceae</taxon>
        <taxon>Thermosynechococcus</taxon>
    </lineage>
</organism>
<evidence type="ECO:0000255" key="1">
    <source>
        <dbReference type="HAMAP-Rule" id="MF_01659"/>
    </source>
</evidence>
<feature type="chain" id="PRO_0000341867" description="2-succinyl-5-enolpyruvyl-6-hydroxy-3-cyclohexene-1-carboxylate synthase">
    <location>
        <begin position="1"/>
        <end position="562"/>
    </location>
</feature>
<proteinExistence type="inferred from homology"/>
<keyword id="KW-0460">Magnesium</keyword>
<keyword id="KW-0464">Manganese</keyword>
<keyword id="KW-0479">Metal-binding</keyword>
<keyword id="KW-1185">Reference proteome</keyword>
<keyword id="KW-0786">Thiamine pyrophosphate</keyword>
<keyword id="KW-0808">Transferase</keyword>
<comment type="function">
    <text evidence="1">Catalyzes the thiamine diphosphate-dependent decarboxylation of 2-oxoglutarate and the subsequent addition of the resulting succinic semialdehyde-thiamine pyrophosphate anion to isochorismate to yield 2-succinyl-5-enolpyruvyl-6-hydroxy-3-cyclohexene-1-carboxylate (SEPHCHC).</text>
</comment>
<comment type="catalytic activity">
    <reaction evidence="1">
        <text>isochorismate + 2-oxoglutarate + H(+) = 5-enolpyruvoyl-6-hydroxy-2-succinyl-cyclohex-3-ene-1-carboxylate + CO2</text>
        <dbReference type="Rhea" id="RHEA:25593"/>
        <dbReference type="ChEBI" id="CHEBI:15378"/>
        <dbReference type="ChEBI" id="CHEBI:16526"/>
        <dbReference type="ChEBI" id="CHEBI:16810"/>
        <dbReference type="ChEBI" id="CHEBI:29780"/>
        <dbReference type="ChEBI" id="CHEBI:58818"/>
        <dbReference type="EC" id="2.2.1.9"/>
    </reaction>
</comment>
<comment type="cofactor">
    <cofactor evidence="1">
        <name>Mg(2+)</name>
        <dbReference type="ChEBI" id="CHEBI:18420"/>
    </cofactor>
    <cofactor evidence="1">
        <name>Mn(2+)</name>
        <dbReference type="ChEBI" id="CHEBI:29035"/>
    </cofactor>
</comment>
<comment type="cofactor">
    <cofactor evidence="1">
        <name>thiamine diphosphate</name>
        <dbReference type="ChEBI" id="CHEBI:58937"/>
    </cofactor>
    <text evidence="1">Binds 1 thiamine pyrophosphate per subunit.</text>
</comment>
<comment type="pathway">
    <text evidence="1">Quinol/quinone metabolism; 1,4-dihydroxy-2-naphthoate biosynthesis; 1,4-dihydroxy-2-naphthoate from chorismate: step 2/7.</text>
</comment>
<comment type="pathway">
    <text evidence="1">Cofactor biosynthesis; phylloquinone biosynthesis.</text>
</comment>
<comment type="subunit">
    <text evidence="1">Homodimer.</text>
</comment>
<comment type="similarity">
    <text evidence="1">Belongs to the TPP enzyme family. MenD subfamily.</text>
</comment>
<accession>Q8DMI6</accession>
<reference key="1">
    <citation type="journal article" date="2002" name="DNA Res.">
        <title>Complete genome structure of the thermophilic cyanobacterium Thermosynechococcus elongatus BP-1.</title>
        <authorList>
            <person name="Nakamura Y."/>
            <person name="Kaneko T."/>
            <person name="Sato S."/>
            <person name="Ikeuchi M."/>
            <person name="Katoh H."/>
            <person name="Sasamoto S."/>
            <person name="Watanabe A."/>
            <person name="Iriguchi M."/>
            <person name="Kawashima K."/>
            <person name="Kimura T."/>
            <person name="Kishida Y."/>
            <person name="Kiyokawa C."/>
            <person name="Kohara M."/>
            <person name="Matsumoto M."/>
            <person name="Matsuno A."/>
            <person name="Nakazaki N."/>
            <person name="Shimpo S."/>
            <person name="Sugimoto M."/>
            <person name="Takeuchi C."/>
            <person name="Yamada M."/>
            <person name="Tabata S."/>
        </authorList>
    </citation>
    <scope>NUCLEOTIDE SEQUENCE [LARGE SCALE GENOMIC DNA]</scope>
    <source>
        <strain>NIES-2133 / IAM M-273 / BP-1</strain>
    </source>
</reference>